<protein>
    <recommendedName>
        <fullName evidence="7">Oxidase ustYa</fullName>
        <ecNumber evidence="9">1.-.-.-</ecNumber>
    </recommendedName>
    <alternativeName>
        <fullName evidence="7">Ustiloxin B biosynthesis protein Ya</fullName>
    </alternativeName>
</protein>
<feature type="chain" id="PRO_0000437293" description="Oxidase ustYa">
    <location>
        <begin position="1"/>
        <end position="213"/>
    </location>
</feature>
<feature type="transmembrane region" description="Helical" evidence="1">
    <location>
        <begin position="48"/>
        <end position="68"/>
    </location>
</feature>
<feature type="region of interest" description="Disordered" evidence="3">
    <location>
        <begin position="1"/>
        <end position="26"/>
    </location>
</feature>
<feature type="short sequence motif" description="HXXHC 1" evidence="9">
    <location>
        <begin position="123"/>
        <end position="127"/>
    </location>
</feature>
<feature type="short sequence motif" description="HXXHC 2" evidence="9">
    <location>
        <begin position="150"/>
        <end position="154"/>
    </location>
</feature>
<feature type="glycosylation site" description="N-linked (GlcNAc...) asparagine" evidence="2">
    <location>
        <position position="98"/>
    </location>
</feature>
<proteinExistence type="evidence at protein level"/>
<gene>
    <name evidence="7" type="primary">ustYa</name>
    <name type="ORF">AFLA_094990</name>
</gene>
<sequence length="213" mass="24399">MAERSSNGYKEVPVRQSEESTIAEEEKDTLLEARSYSRRDRKRSRSKAVWFLIALLLLSNIGLLGGLIHYFRKTHHKEKDVPWLPPKTVGRGFVNINNDTALPDQPGLDQSLPHQRAMISVFHQLHCIYMTREGYYAAREGNLDQVNAAHLMHCWDYLRQAIMCHADTTLEWIPAPPNDKGSTGWGVEHTCGDFDAIARWAEDNRLKTTYGIH</sequence>
<evidence type="ECO:0000255" key="1"/>
<evidence type="ECO:0000255" key="2">
    <source>
        <dbReference type="PROSITE-ProRule" id="PRU00498"/>
    </source>
</evidence>
<evidence type="ECO:0000256" key="3">
    <source>
        <dbReference type="SAM" id="MobiDB-lite"/>
    </source>
</evidence>
<evidence type="ECO:0000269" key="4">
    <source>
    </source>
</evidence>
<evidence type="ECO:0000269" key="5">
    <source>
    </source>
</evidence>
<evidence type="ECO:0000269" key="6">
    <source>
    </source>
</evidence>
<evidence type="ECO:0000303" key="7">
    <source>
    </source>
</evidence>
<evidence type="ECO:0000305" key="8"/>
<evidence type="ECO:0000305" key="9">
    <source>
    </source>
</evidence>
<dbReference type="EC" id="1.-.-.-" evidence="9"/>
<dbReference type="EMBL" id="EQ963480">
    <property type="protein sequence ID" value="EED49418.1"/>
    <property type="molecule type" value="Genomic_DNA"/>
</dbReference>
<dbReference type="RefSeq" id="XP_002381319.1">
    <property type="nucleotide sequence ID" value="XM_002381278.1"/>
</dbReference>
<dbReference type="SMR" id="B8NM67"/>
<dbReference type="STRING" id="332952.B8NM67"/>
<dbReference type="GlyCosmos" id="B8NM67">
    <property type="glycosylation" value="1 site, No reported glycans"/>
</dbReference>
<dbReference type="EnsemblFungi" id="EED49418">
    <property type="protein sequence ID" value="EED49418"/>
    <property type="gene ID" value="AFLA_094990"/>
</dbReference>
<dbReference type="VEuPathDB" id="FungiDB:AFLA_009735"/>
<dbReference type="eggNOG" id="ENOG502S1UR">
    <property type="taxonomic scope" value="Eukaryota"/>
</dbReference>
<dbReference type="HOGENOM" id="CLU_042941_4_2_1"/>
<dbReference type="OMA" id="PFGENTQ"/>
<dbReference type="GO" id="GO:0016020">
    <property type="term" value="C:membrane"/>
    <property type="evidence" value="ECO:0007669"/>
    <property type="project" value="UniProtKB-SubCell"/>
</dbReference>
<dbReference type="GO" id="GO:0016491">
    <property type="term" value="F:oxidoreductase activity"/>
    <property type="evidence" value="ECO:0007669"/>
    <property type="project" value="UniProtKB-KW"/>
</dbReference>
<dbReference type="GO" id="GO:0043386">
    <property type="term" value="P:mycotoxin biosynthetic process"/>
    <property type="evidence" value="ECO:0007669"/>
    <property type="project" value="InterPro"/>
</dbReference>
<dbReference type="InterPro" id="IPR021765">
    <property type="entry name" value="UstYa-like"/>
</dbReference>
<dbReference type="PANTHER" id="PTHR33365:SF11">
    <property type="entry name" value="TAT PATHWAY SIGNAL SEQUENCE"/>
    <property type="match status" value="1"/>
</dbReference>
<dbReference type="PANTHER" id="PTHR33365">
    <property type="entry name" value="YALI0B05434P"/>
    <property type="match status" value="1"/>
</dbReference>
<dbReference type="Pfam" id="PF11807">
    <property type="entry name" value="UstYa"/>
    <property type="match status" value="1"/>
</dbReference>
<comment type="function">
    <text evidence="4 5 6">Oxidase; part of the gene cluster that mediates the biosynthesis of the secondary metabolite ustiloxin B, an antimitotic tetrapeptide (PubMed:24841822, PubMed:26703898, PubMed:27166860). First, ustA is processed by the subtilisin-like endoprotease Kex2 that is outside the ustiloxin B gene cluster, at the C-terminal side of Arg-Lys, after transfer to Golgi apparatus through the endoplasmic reticulum (ER) (PubMed:24841822). Cleavage by KEX2 generates 16 peptides YAIG-I to YAIG-XVI (PubMed:24841822). To process the precursor peptide further, at least two peptidases are necessary to cleave the N-terminal and C-terminal sides of the Tyr-Ala-Ile-Gly core peptide which serves as backbone for the synthesis of ustiloxin B, through cyclization and modification of the tyrosine with a non-protein coding amino acid, norvaline (PubMed:24841822). One of the two peptidases must be the serine peptidase ustP; and the other pepdidase is probably ustH (PubMed:24841822). Macrocyclization of the core peptide derived from ustA requires the tyrosinase ustQ, as well as the homologous oxidases ustYa and ustYb, and leads to the production of the first cyclization product N-desmethylustiloxin F (PubMed:26703898, PubMed:27166860). For the formation of N-desmethylustiloxin F, three oxidation steps are required, hydroxylation at the benzylic position, hydroxylation at either the aromatic ring of Tyr or beta-position of Ile, and oxidative cyclization (PubMed:27166860). UstQ may catalyze the oxidation of a phenol moiety, whereas the ustYa and ustYb are most likely responsible for the remaining two-step oxidations (PubMed:27166860). N-desmethylustiloxin F is then methylated by ustM to yield ustiloxin F which in turn substrate of the cytochrome P450 monooxygenase ustC which catalyzes the formation of S-deoxyustiloxin H (PubMed:27166860). The flavoprotein monooxygenases ustF1 and ustF2 then participate in the modification of the side chain of S-deoxyustiloxin H, leading to the synthesis of an oxime intermediate, via ustiloxin H (PubMed:27166860). Finally, carboxylative dehydration performed by the cysteine desulfurase-like protein ustD yields ustiloxin B (PubMed:27166860).</text>
</comment>
<comment type="pathway">
    <text evidence="5">Mycotoxin biosynthesis.</text>
</comment>
<comment type="subcellular location">
    <subcellularLocation>
        <location evidence="1">Membrane</location>
        <topology evidence="1">Single-pass membrane protein</topology>
    </subcellularLocation>
</comment>
<comment type="domain">
    <text evidence="5">The 2 HXXHC motifs are conserved in ustYa family proteins and might form active sites.</text>
</comment>
<comment type="disruption phenotype">
    <text evidence="4 5">Decreases the production of ustiloxin B (PubMed:24841822, PubMed:26703898).</text>
</comment>
<comment type="similarity">
    <text evidence="8">Belongs to the ustYa family.</text>
</comment>
<organism>
    <name type="scientific">Aspergillus flavus (strain ATCC 200026 / FGSC A1120 / IAM 13836 / NRRL 3357 / JCM 12722 / SRRC 167)</name>
    <dbReference type="NCBI Taxonomy" id="332952"/>
    <lineage>
        <taxon>Eukaryota</taxon>
        <taxon>Fungi</taxon>
        <taxon>Dikarya</taxon>
        <taxon>Ascomycota</taxon>
        <taxon>Pezizomycotina</taxon>
        <taxon>Eurotiomycetes</taxon>
        <taxon>Eurotiomycetidae</taxon>
        <taxon>Eurotiales</taxon>
        <taxon>Aspergillaceae</taxon>
        <taxon>Aspergillus</taxon>
        <taxon>Aspergillus subgen. Circumdati</taxon>
    </lineage>
</organism>
<keyword id="KW-0325">Glycoprotein</keyword>
<keyword id="KW-0472">Membrane</keyword>
<keyword id="KW-0560">Oxidoreductase</keyword>
<keyword id="KW-0812">Transmembrane</keyword>
<keyword id="KW-1133">Transmembrane helix</keyword>
<reference key="1">
    <citation type="journal article" date="2015" name="Genome Announc.">
        <title>Genome sequence of Aspergillus flavus NRRL 3357, a strain that causes aflatoxin contamination of food and feed.</title>
        <authorList>
            <person name="Nierman W.C."/>
            <person name="Yu J."/>
            <person name="Fedorova-Abrams N.D."/>
            <person name="Losada L."/>
            <person name="Cleveland T.E."/>
            <person name="Bhatnagar D."/>
            <person name="Bennett J.W."/>
            <person name="Dean R."/>
            <person name="Payne G.A."/>
        </authorList>
    </citation>
    <scope>NUCLEOTIDE SEQUENCE [LARGE SCALE GENOMIC DNA]</scope>
    <source>
        <strain>ATCC 200026 / FGSC A1120 / IAM 13836 / NRRL 3357 / JCM 12722 / SRRC 167</strain>
    </source>
</reference>
<reference key="2">
    <citation type="journal article" date="2014" name="Fungal Genet. Biol.">
        <title>Characterization of the biosynthetic gene cluster for the ribosomally synthesized cyclic peptide ustiloxin B in Aspergillus flavus.</title>
        <authorList>
            <person name="Umemura M."/>
            <person name="Nagano N."/>
            <person name="Koike H."/>
            <person name="Kawano J."/>
            <person name="Ishii T."/>
            <person name="Miyamura Y."/>
            <person name="Kikuchi M."/>
            <person name="Tamano K."/>
            <person name="Yu J."/>
            <person name="Shin-ya K."/>
            <person name="Machida M."/>
        </authorList>
    </citation>
    <scope>FUNCTION</scope>
    <scope>DISRUPTION PHENOTYPE</scope>
</reference>
<reference key="3">
    <citation type="journal article" date="2016" name="Angew. Chem. Int. Ed.">
        <title>Unveiling the biosynthetic pathway of the ribosomally synthesized and post-translationally modified peptide ustiloxin B in filamentous fungi.</title>
        <authorList>
            <person name="Ye Y."/>
            <person name="Minami A."/>
            <person name="Igarashi Y."/>
            <person name="Izumikawa M."/>
            <person name="Umemura M."/>
            <person name="Nagano N."/>
            <person name="Machida M."/>
            <person name="Kawahara T."/>
            <person name="Shin-Ya K."/>
            <person name="Gomi K."/>
            <person name="Oikawa H."/>
        </authorList>
    </citation>
    <scope>FUNCTION</scope>
</reference>
<reference key="4">
    <citation type="journal article" date="2016" name="Fungal Genet. Biol.">
        <title>Class of cyclic ribosomal peptide synthetic genes in filamentous fungi.</title>
        <authorList>
            <person name="Nagano N."/>
            <person name="Umemura M."/>
            <person name="Izumikawa M."/>
            <person name="Kawano J."/>
            <person name="Ishii T."/>
            <person name="Kikuchi M."/>
            <person name="Tomii K."/>
            <person name="Kumagai T."/>
            <person name="Yoshimi A."/>
            <person name="Machida M."/>
            <person name="Abe K."/>
            <person name="Shin-ya K."/>
            <person name="Asai K."/>
        </authorList>
    </citation>
    <scope>FUNCTION</scope>
    <scope>DISRUPTION PHENOTYPE</scope>
    <scope>DOMAIN</scope>
    <scope>CATALYTIC ACTIVITY</scope>
</reference>
<accession>B8NM67</accession>
<name>USTYA_ASPFN</name>